<organism>
    <name type="scientific">Burkholderia mallei (strain ATCC 23344)</name>
    <dbReference type="NCBI Taxonomy" id="243160"/>
    <lineage>
        <taxon>Bacteria</taxon>
        <taxon>Pseudomonadati</taxon>
        <taxon>Pseudomonadota</taxon>
        <taxon>Betaproteobacteria</taxon>
        <taxon>Burkholderiales</taxon>
        <taxon>Burkholderiaceae</taxon>
        <taxon>Burkholderia</taxon>
        <taxon>pseudomallei group</taxon>
    </lineage>
</organism>
<gene>
    <name evidence="2" type="primary">tal</name>
    <name type="ordered locus">BMA1940</name>
</gene>
<name>TAL_BURMA</name>
<evidence type="ECO:0000250" key="1"/>
<evidence type="ECO:0000255" key="2">
    <source>
        <dbReference type="HAMAP-Rule" id="MF_00492"/>
    </source>
</evidence>
<reference key="1">
    <citation type="journal article" date="2004" name="Proc. Natl. Acad. Sci. U.S.A.">
        <title>Structural flexibility in the Burkholderia mallei genome.</title>
        <authorList>
            <person name="Nierman W.C."/>
            <person name="DeShazer D."/>
            <person name="Kim H.S."/>
            <person name="Tettelin H."/>
            <person name="Nelson K.E."/>
            <person name="Feldblyum T.V."/>
            <person name="Ulrich R.L."/>
            <person name="Ronning C.M."/>
            <person name="Brinkac L.M."/>
            <person name="Daugherty S.C."/>
            <person name="Davidsen T.D."/>
            <person name="DeBoy R.T."/>
            <person name="Dimitrov G."/>
            <person name="Dodson R.J."/>
            <person name="Durkin A.S."/>
            <person name="Gwinn M.L."/>
            <person name="Haft D.H."/>
            <person name="Khouri H.M."/>
            <person name="Kolonay J.F."/>
            <person name="Madupu R."/>
            <person name="Mohammoud Y."/>
            <person name="Nelson W.C."/>
            <person name="Radune D."/>
            <person name="Romero C.M."/>
            <person name="Sarria S."/>
            <person name="Selengut J."/>
            <person name="Shamblin C."/>
            <person name="Sullivan S.A."/>
            <person name="White O."/>
            <person name="Yu Y."/>
            <person name="Zafar N."/>
            <person name="Zhou L."/>
            <person name="Fraser C.M."/>
        </authorList>
    </citation>
    <scope>NUCLEOTIDE SEQUENCE [LARGE SCALE GENOMIC DNA]</scope>
    <source>
        <strain>ATCC 23344</strain>
    </source>
</reference>
<keyword id="KW-0963">Cytoplasm</keyword>
<keyword id="KW-0570">Pentose shunt</keyword>
<keyword id="KW-1185">Reference proteome</keyword>
<keyword id="KW-0704">Schiff base</keyword>
<keyword id="KW-0808">Transferase</keyword>
<feature type="chain" id="PRO_0000230945" description="Transaldolase">
    <location>
        <begin position="1"/>
        <end position="317"/>
    </location>
</feature>
<feature type="active site" description="Schiff-base intermediate with substrate" evidence="2">
    <location>
        <position position="126"/>
    </location>
</feature>
<accession>Q62ID7</accession>
<sequence length="317" mass="35401">MTTALDQLKQYTTVVADTGDFQQLAQYKPQDATTNPSLILKAVQKDAYRPILEKTVRDHAGESVGFIIDRLLIAFGTEILKLIPGRVSTEVDARLSFDTQRSIDKGREIIKLYEAAGVGRERVLIKLASTWEGIRAAEVLQREGIRCNMTLLFSLVQAAACAEAGAQLISPFVGRIYDWYRKQKGADWDEAQDGGANDPGVQSVRRIYTYYKHFGYRTEVMGASFRTTSQITELAGCDLLTISPELLQKLHDSTEAVARKLSPDEARDARLERVAIDESSFRFQLNDDAMATEKLAEGIRLFSADAVKLEKMIEALR</sequence>
<dbReference type="EC" id="2.2.1.2" evidence="2"/>
<dbReference type="EMBL" id="CP000010">
    <property type="protein sequence ID" value="AAU49902.1"/>
    <property type="molecule type" value="Genomic_DNA"/>
</dbReference>
<dbReference type="RefSeq" id="WP_004186409.1">
    <property type="nucleotide sequence ID" value="NC_006348.1"/>
</dbReference>
<dbReference type="RefSeq" id="YP_103533.1">
    <property type="nucleotide sequence ID" value="NC_006348.1"/>
</dbReference>
<dbReference type="SMR" id="Q62ID7"/>
<dbReference type="GeneID" id="92979654"/>
<dbReference type="KEGG" id="bma:BMA1940"/>
<dbReference type="PATRIC" id="fig|243160.12.peg.2007"/>
<dbReference type="eggNOG" id="COG0176">
    <property type="taxonomic scope" value="Bacteria"/>
</dbReference>
<dbReference type="HOGENOM" id="CLU_047470_0_1_4"/>
<dbReference type="UniPathway" id="UPA00115">
    <property type="reaction ID" value="UER00414"/>
</dbReference>
<dbReference type="Proteomes" id="UP000006693">
    <property type="component" value="Chromosome 1"/>
</dbReference>
<dbReference type="GO" id="GO:0005737">
    <property type="term" value="C:cytoplasm"/>
    <property type="evidence" value="ECO:0007669"/>
    <property type="project" value="UniProtKB-SubCell"/>
</dbReference>
<dbReference type="GO" id="GO:0004801">
    <property type="term" value="F:transaldolase activity"/>
    <property type="evidence" value="ECO:0000250"/>
    <property type="project" value="UniProtKB"/>
</dbReference>
<dbReference type="GO" id="GO:0005975">
    <property type="term" value="P:carbohydrate metabolic process"/>
    <property type="evidence" value="ECO:0007669"/>
    <property type="project" value="InterPro"/>
</dbReference>
<dbReference type="GO" id="GO:0009052">
    <property type="term" value="P:pentose-phosphate shunt, non-oxidative branch"/>
    <property type="evidence" value="ECO:0007669"/>
    <property type="project" value="TreeGrafter"/>
</dbReference>
<dbReference type="CDD" id="cd00957">
    <property type="entry name" value="Transaldolase_TalAB"/>
    <property type="match status" value="1"/>
</dbReference>
<dbReference type="FunFam" id="3.20.20.70:FF:000002">
    <property type="entry name" value="Transaldolase"/>
    <property type="match status" value="1"/>
</dbReference>
<dbReference type="Gene3D" id="3.20.20.70">
    <property type="entry name" value="Aldolase class I"/>
    <property type="match status" value="1"/>
</dbReference>
<dbReference type="HAMAP" id="MF_00492">
    <property type="entry name" value="Transaldolase_1"/>
    <property type="match status" value="1"/>
</dbReference>
<dbReference type="InterPro" id="IPR013785">
    <property type="entry name" value="Aldolase_TIM"/>
</dbReference>
<dbReference type="InterPro" id="IPR001585">
    <property type="entry name" value="TAL/FSA"/>
</dbReference>
<dbReference type="InterPro" id="IPR004730">
    <property type="entry name" value="Transaldolase_1"/>
</dbReference>
<dbReference type="InterPro" id="IPR018225">
    <property type="entry name" value="Transaldolase_AS"/>
</dbReference>
<dbReference type="NCBIfam" id="TIGR00874">
    <property type="entry name" value="talAB"/>
    <property type="match status" value="1"/>
</dbReference>
<dbReference type="PANTHER" id="PTHR10683">
    <property type="entry name" value="TRANSALDOLASE"/>
    <property type="match status" value="1"/>
</dbReference>
<dbReference type="PANTHER" id="PTHR10683:SF18">
    <property type="entry name" value="TRANSALDOLASE"/>
    <property type="match status" value="1"/>
</dbReference>
<dbReference type="Pfam" id="PF00923">
    <property type="entry name" value="TAL_FSA"/>
    <property type="match status" value="1"/>
</dbReference>
<dbReference type="SUPFAM" id="SSF51569">
    <property type="entry name" value="Aldolase"/>
    <property type="match status" value="1"/>
</dbReference>
<dbReference type="PROSITE" id="PS01054">
    <property type="entry name" value="TRANSALDOLASE_1"/>
    <property type="match status" value="1"/>
</dbReference>
<dbReference type="PROSITE" id="PS00958">
    <property type="entry name" value="TRANSALDOLASE_2"/>
    <property type="match status" value="1"/>
</dbReference>
<proteinExistence type="inferred from homology"/>
<protein>
    <recommendedName>
        <fullName evidence="2">Transaldolase</fullName>
        <ecNumber evidence="2">2.2.1.2</ecNumber>
    </recommendedName>
</protein>
<comment type="function">
    <text evidence="2">Transaldolase is important for the balance of metabolites in the pentose-phosphate pathway.</text>
</comment>
<comment type="catalytic activity">
    <reaction evidence="2">
        <text>D-sedoheptulose 7-phosphate + D-glyceraldehyde 3-phosphate = D-erythrose 4-phosphate + beta-D-fructose 6-phosphate</text>
        <dbReference type="Rhea" id="RHEA:17053"/>
        <dbReference type="ChEBI" id="CHEBI:16897"/>
        <dbReference type="ChEBI" id="CHEBI:57483"/>
        <dbReference type="ChEBI" id="CHEBI:57634"/>
        <dbReference type="ChEBI" id="CHEBI:59776"/>
        <dbReference type="EC" id="2.2.1.2"/>
    </reaction>
</comment>
<comment type="pathway">
    <text evidence="2">Carbohydrate degradation; pentose phosphate pathway; D-glyceraldehyde 3-phosphate and beta-D-fructose 6-phosphate from D-ribose 5-phosphate and D-xylulose 5-phosphate (non-oxidative stage): step 2/3.</text>
</comment>
<comment type="subunit">
    <text evidence="1">Homodimer.</text>
</comment>
<comment type="subcellular location">
    <subcellularLocation>
        <location evidence="2">Cytoplasm</location>
    </subcellularLocation>
</comment>
<comment type="similarity">
    <text evidence="2">Belongs to the transaldolase family. Type 1 subfamily.</text>
</comment>